<proteinExistence type="inferred from homology"/>
<organism>
    <name type="scientific">Frankia casuarinae (strain DSM 45818 / CECT 9043 / HFP020203 / CcI3)</name>
    <dbReference type="NCBI Taxonomy" id="106370"/>
    <lineage>
        <taxon>Bacteria</taxon>
        <taxon>Bacillati</taxon>
        <taxon>Actinomycetota</taxon>
        <taxon>Actinomycetes</taxon>
        <taxon>Frankiales</taxon>
        <taxon>Frankiaceae</taxon>
        <taxon>Frankia</taxon>
    </lineage>
</organism>
<protein>
    <recommendedName>
        <fullName evidence="1">Ribonuclease HII</fullName>
        <shortName evidence="1">RNase HII</shortName>
        <ecNumber evidence="1">3.1.26.4</ecNumber>
    </recommendedName>
</protein>
<name>RNH2_FRACC</name>
<comment type="function">
    <text evidence="1">Endonuclease that specifically degrades the RNA of RNA-DNA hybrids.</text>
</comment>
<comment type="catalytic activity">
    <reaction evidence="1">
        <text>Endonucleolytic cleavage to 5'-phosphomonoester.</text>
        <dbReference type="EC" id="3.1.26.4"/>
    </reaction>
</comment>
<comment type="cofactor">
    <cofactor evidence="1">
        <name>Mn(2+)</name>
        <dbReference type="ChEBI" id="CHEBI:29035"/>
    </cofactor>
    <cofactor evidence="1">
        <name>Mg(2+)</name>
        <dbReference type="ChEBI" id="CHEBI:18420"/>
    </cofactor>
    <text evidence="1">Manganese or magnesium. Binds 1 divalent metal ion per monomer in the absence of substrate. May bind a second metal ion after substrate binding.</text>
</comment>
<comment type="subcellular location">
    <subcellularLocation>
        <location evidence="1">Cytoplasm</location>
    </subcellularLocation>
</comment>
<comment type="similarity">
    <text evidence="1">Belongs to the RNase HII family.</text>
</comment>
<evidence type="ECO:0000255" key="1">
    <source>
        <dbReference type="HAMAP-Rule" id="MF_00052"/>
    </source>
</evidence>
<evidence type="ECO:0000255" key="2">
    <source>
        <dbReference type="PROSITE-ProRule" id="PRU01319"/>
    </source>
</evidence>
<feature type="chain" id="PRO_0000334899" description="Ribonuclease HII">
    <location>
        <begin position="1"/>
        <end position="240"/>
    </location>
</feature>
<feature type="domain" description="RNase H type-2" evidence="2">
    <location>
        <begin position="27"/>
        <end position="226"/>
    </location>
</feature>
<feature type="binding site" evidence="1">
    <location>
        <position position="33"/>
    </location>
    <ligand>
        <name>a divalent metal cation</name>
        <dbReference type="ChEBI" id="CHEBI:60240"/>
    </ligand>
</feature>
<feature type="binding site" evidence="1">
    <location>
        <position position="34"/>
    </location>
    <ligand>
        <name>a divalent metal cation</name>
        <dbReference type="ChEBI" id="CHEBI:60240"/>
    </ligand>
</feature>
<feature type="binding site" evidence="1">
    <location>
        <position position="127"/>
    </location>
    <ligand>
        <name>a divalent metal cation</name>
        <dbReference type="ChEBI" id="CHEBI:60240"/>
    </ligand>
</feature>
<sequence>MRHYGVALRRDAGLFGYERALNRHGLGPVAGVDEAGRGACAGPLVIAAVILAPEARQRLARLADSKLLTEQIRESVFEDVMAAAAAWSTVVISAAEIDRVGLHVANITGMRRAVARLSARPGYVLTDGFAVAGFGVESLAVVKGDRVVACVAAASVVAKVTRDRIMRALHTRYAEYDFAQHKGYVTAAHAAALARCGPCDEHRMSYVNVAAHAATTREARSLRLEDRVLVTSRHGVTETV</sequence>
<keyword id="KW-0963">Cytoplasm</keyword>
<keyword id="KW-0255">Endonuclease</keyword>
<keyword id="KW-0378">Hydrolase</keyword>
<keyword id="KW-0464">Manganese</keyword>
<keyword id="KW-0479">Metal-binding</keyword>
<keyword id="KW-0540">Nuclease</keyword>
<keyword id="KW-1185">Reference proteome</keyword>
<dbReference type="EC" id="3.1.26.4" evidence="1"/>
<dbReference type="EMBL" id="CP000249">
    <property type="protein sequence ID" value="ABD12940.1"/>
    <property type="molecule type" value="Genomic_DNA"/>
</dbReference>
<dbReference type="RefSeq" id="WP_011437964.1">
    <property type="nucleotide sequence ID" value="NZ_LRTJ01000033.1"/>
</dbReference>
<dbReference type="SMR" id="Q2J702"/>
<dbReference type="STRING" id="106370.Francci3_3588"/>
<dbReference type="KEGG" id="fra:Francci3_3588"/>
<dbReference type="eggNOG" id="COG0164">
    <property type="taxonomic scope" value="Bacteria"/>
</dbReference>
<dbReference type="HOGENOM" id="CLU_036532_1_0_11"/>
<dbReference type="OrthoDB" id="9803420at2"/>
<dbReference type="PhylomeDB" id="Q2J702"/>
<dbReference type="Proteomes" id="UP000001937">
    <property type="component" value="Chromosome"/>
</dbReference>
<dbReference type="GO" id="GO:0005737">
    <property type="term" value="C:cytoplasm"/>
    <property type="evidence" value="ECO:0007669"/>
    <property type="project" value="UniProtKB-SubCell"/>
</dbReference>
<dbReference type="GO" id="GO:0032299">
    <property type="term" value="C:ribonuclease H2 complex"/>
    <property type="evidence" value="ECO:0007669"/>
    <property type="project" value="TreeGrafter"/>
</dbReference>
<dbReference type="GO" id="GO:0030145">
    <property type="term" value="F:manganese ion binding"/>
    <property type="evidence" value="ECO:0007669"/>
    <property type="project" value="UniProtKB-UniRule"/>
</dbReference>
<dbReference type="GO" id="GO:0003723">
    <property type="term" value="F:RNA binding"/>
    <property type="evidence" value="ECO:0007669"/>
    <property type="project" value="InterPro"/>
</dbReference>
<dbReference type="GO" id="GO:0004523">
    <property type="term" value="F:RNA-DNA hybrid ribonuclease activity"/>
    <property type="evidence" value="ECO:0007669"/>
    <property type="project" value="UniProtKB-UniRule"/>
</dbReference>
<dbReference type="GO" id="GO:0043137">
    <property type="term" value="P:DNA replication, removal of RNA primer"/>
    <property type="evidence" value="ECO:0007669"/>
    <property type="project" value="TreeGrafter"/>
</dbReference>
<dbReference type="GO" id="GO:0006298">
    <property type="term" value="P:mismatch repair"/>
    <property type="evidence" value="ECO:0007669"/>
    <property type="project" value="TreeGrafter"/>
</dbReference>
<dbReference type="CDD" id="cd07182">
    <property type="entry name" value="RNase_HII_bacteria_HII_like"/>
    <property type="match status" value="1"/>
</dbReference>
<dbReference type="Gene3D" id="3.30.420.10">
    <property type="entry name" value="Ribonuclease H-like superfamily/Ribonuclease H"/>
    <property type="match status" value="1"/>
</dbReference>
<dbReference type="HAMAP" id="MF_00052_B">
    <property type="entry name" value="RNase_HII_B"/>
    <property type="match status" value="1"/>
</dbReference>
<dbReference type="InterPro" id="IPR022898">
    <property type="entry name" value="RNase_HII"/>
</dbReference>
<dbReference type="InterPro" id="IPR001352">
    <property type="entry name" value="RNase_HII/HIII"/>
</dbReference>
<dbReference type="InterPro" id="IPR024567">
    <property type="entry name" value="RNase_HII/HIII_dom"/>
</dbReference>
<dbReference type="InterPro" id="IPR012337">
    <property type="entry name" value="RNaseH-like_sf"/>
</dbReference>
<dbReference type="InterPro" id="IPR036397">
    <property type="entry name" value="RNaseH_sf"/>
</dbReference>
<dbReference type="NCBIfam" id="NF000595">
    <property type="entry name" value="PRK00015.1-3"/>
    <property type="match status" value="1"/>
</dbReference>
<dbReference type="NCBIfam" id="NF000598">
    <property type="entry name" value="PRK00015.2-2"/>
    <property type="match status" value="1"/>
</dbReference>
<dbReference type="PANTHER" id="PTHR10954">
    <property type="entry name" value="RIBONUCLEASE H2 SUBUNIT A"/>
    <property type="match status" value="1"/>
</dbReference>
<dbReference type="PANTHER" id="PTHR10954:SF18">
    <property type="entry name" value="RIBONUCLEASE HII"/>
    <property type="match status" value="1"/>
</dbReference>
<dbReference type="Pfam" id="PF01351">
    <property type="entry name" value="RNase_HII"/>
    <property type="match status" value="1"/>
</dbReference>
<dbReference type="SUPFAM" id="SSF53098">
    <property type="entry name" value="Ribonuclease H-like"/>
    <property type="match status" value="1"/>
</dbReference>
<dbReference type="PROSITE" id="PS51975">
    <property type="entry name" value="RNASE_H_2"/>
    <property type="match status" value="1"/>
</dbReference>
<accession>Q2J702</accession>
<gene>
    <name evidence="1" type="primary">rnhB</name>
    <name type="ordered locus">Francci3_3588</name>
</gene>
<reference key="1">
    <citation type="journal article" date="2007" name="Genome Res.">
        <title>Genome characteristics of facultatively symbiotic Frankia sp. strains reflect host range and host plant biogeography.</title>
        <authorList>
            <person name="Normand P."/>
            <person name="Lapierre P."/>
            <person name="Tisa L.S."/>
            <person name="Gogarten J.P."/>
            <person name="Alloisio N."/>
            <person name="Bagnarol E."/>
            <person name="Bassi C.A."/>
            <person name="Berry A.M."/>
            <person name="Bickhart D.M."/>
            <person name="Choisne N."/>
            <person name="Couloux A."/>
            <person name="Cournoyer B."/>
            <person name="Cruveiller S."/>
            <person name="Daubin V."/>
            <person name="Demange N."/>
            <person name="Francino M.P."/>
            <person name="Goltsman E."/>
            <person name="Huang Y."/>
            <person name="Kopp O.R."/>
            <person name="Labarre L."/>
            <person name="Lapidus A."/>
            <person name="Lavire C."/>
            <person name="Marechal J."/>
            <person name="Martinez M."/>
            <person name="Mastronunzio J.E."/>
            <person name="Mullin B.C."/>
            <person name="Niemann J."/>
            <person name="Pujic P."/>
            <person name="Rawnsley T."/>
            <person name="Rouy Z."/>
            <person name="Schenowitz C."/>
            <person name="Sellstedt A."/>
            <person name="Tavares F."/>
            <person name="Tomkins J.P."/>
            <person name="Vallenet D."/>
            <person name="Valverde C."/>
            <person name="Wall L.G."/>
            <person name="Wang Y."/>
            <person name="Medigue C."/>
            <person name="Benson D.R."/>
        </authorList>
    </citation>
    <scope>NUCLEOTIDE SEQUENCE [LARGE SCALE GENOMIC DNA]</scope>
    <source>
        <strain>DSM 45818 / CECT 9043 / HFP020203 / CcI3</strain>
    </source>
</reference>